<dbReference type="EMBL" id="AH010242">
    <property type="protein sequence ID" value="AAG60715.1"/>
    <property type="molecule type" value="Genomic_DNA"/>
</dbReference>
<dbReference type="EMBL" id="BA000040">
    <property type="protein sequence ID" value="BAC46995.1"/>
    <property type="molecule type" value="Genomic_DNA"/>
</dbReference>
<dbReference type="RefSeq" id="NP_768370.1">
    <property type="nucleotide sequence ID" value="NC_004463.1"/>
</dbReference>
<dbReference type="SMR" id="Q9ANP8"/>
<dbReference type="FunCoup" id="Q9ANP8">
    <property type="interactions" value="72"/>
</dbReference>
<dbReference type="STRING" id="224911.AAV28_05580"/>
<dbReference type="EnsemblBacteria" id="BAC46995">
    <property type="protein sequence ID" value="BAC46995"/>
    <property type="gene ID" value="BAC46995"/>
</dbReference>
<dbReference type="KEGG" id="bja:blr1730"/>
<dbReference type="PATRIC" id="fig|224911.44.peg.1193"/>
<dbReference type="eggNOG" id="COG0375">
    <property type="taxonomic scope" value="Bacteria"/>
</dbReference>
<dbReference type="HOGENOM" id="CLU_126929_0_0_5"/>
<dbReference type="InParanoid" id="Q9ANP8"/>
<dbReference type="OrthoDB" id="288014at2"/>
<dbReference type="PhylomeDB" id="Q9ANP8"/>
<dbReference type="Proteomes" id="UP000002526">
    <property type="component" value="Chromosome"/>
</dbReference>
<dbReference type="GO" id="GO:0016151">
    <property type="term" value="F:nickel cation binding"/>
    <property type="evidence" value="ECO:0000318"/>
    <property type="project" value="GO_Central"/>
</dbReference>
<dbReference type="GO" id="GO:0008270">
    <property type="term" value="F:zinc ion binding"/>
    <property type="evidence" value="ECO:0000318"/>
    <property type="project" value="GO_Central"/>
</dbReference>
<dbReference type="GO" id="GO:0051604">
    <property type="term" value="P:protein maturation"/>
    <property type="evidence" value="ECO:0000318"/>
    <property type="project" value="GO_Central"/>
</dbReference>
<dbReference type="GO" id="GO:0036211">
    <property type="term" value="P:protein modification process"/>
    <property type="evidence" value="ECO:0007669"/>
    <property type="project" value="UniProtKB-UniRule"/>
</dbReference>
<dbReference type="FunFam" id="3.30.2320.80:FF:000001">
    <property type="entry name" value="Hydrogenase maturation factor HypA"/>
    <property type="match status" value="1"/>
</dbReference>
<dbReference type="Gene3D" id="3.30.2320.80">
    <property type="match status" value="1"/>
</dbReference>
<dbReference type="HAMAP" id="MF_00213">
    <property type="entry name" value="HypA_HybF"/>
    <property type="match status" value="1"/>
</dbReference>
<dbReference type="InterPro" id="IPR000688">
    <property type="entry name" value="HypA/HybF"/>
</dbReference>
<dbReference type="NCBIfam" id="TIGR00100">
    <property type="entry name" value="hypA"/>
    <property type="match status" value="1"/>
</dbReference>
<dbReference type="PANTHER" id="PTHR34535">
    <property type="entry name" value="HYDROGENASE MATURATION FACTOR HYPA"/>
    <property type="match status" value="1"/>
</dbReference>
<dbReference type="PANTHER" id="PTHR34535:SF3">
    <property type="entry name" value="HYDROGENASE MATURATION FACTOR HYPA"/>
    <property type="match status" value="1"/>
</dbReference>
<dbReference type="Pfam" id="PF01155">
    <property type="entry name" value="HypA"/>
    <property type="match status" value="1"/>
</dbReference>
<dbReference type="PIRSF" id="PIRSF004761">
    <property type="entry name" value="Hydrgn_mat_HypA"/>
    <property type="match status" value="1"/>
</dbReference>
<sequence length="113" mass="12279">MHEMAICMGIIQIVEEKVRERSSSRVRSVCLELGTLSHAAPEAIRFCFAVAAMRTVAEGAALNIVELPGVAWCMSCSKSVEIARRGDCCPCCGSYQLQVTAGEQMRVKALEID</sequence>
<reference key="1">
    <citation type="journal article" date="2001" name="J. Bacteriol.">
        <title>Potential symbiosis-specific genes uncovered by sequencing a 410-kb DNA region of the Bradyrhizobium japonicum chromosome.</title>
        <authorList>
            <person name="Goettfert M."/>
            <person name="Roethlisberger S."/>
            <person name="Kuendig C."/>
            <person name="Beck C."/>
            <person name="Marty R."/>
            <person name="Hennecke H."/>
        </authorList>
    </citation>
    <scope>NUCLEOTIDE SEQUENCE [GENOMIC DNA]</scope>
    <source>
        <strain>USDA 110spc4</strain>
    </source>
</reference>
<reference key="2">
    <citation type="journal article" date="2002" name="DNA Res.">
        <title>Complete genomic sequence of nitrogen-fixing symbiotic bacterium Bradyrhizobium japonicum USDA110.</title>
        <authorList>
            <person name="Kaneko T."/>
            <person name="Nakamura Y."/>
            <person name="Sato S."/>
            <person name="Minamisawa K."/>
            <person name="Uchiumi T."/>
            <person name="Sasamoto S."/>
            <person name="Watanabe A."/>
            <person name="Idesawa K."/>
            <person name="Iriguchi M."/>
            <person name="Kawashima K."/>
            <person name="Kohara M."/>
            <person name="Matsumoto M."/>
            <person name="Shimpo S."/>
            <person name="Tsuruoka H."/>
            <person name="Wada T."/>
            <person name="Yamada M."/>
            <person name="Tabata S."/>
        </authorList>
    </citation>
    <scope>NUCLEOTIDE SEQUENCE [LARGE SCALE GENOMIC DNA]</scope>
    <source>
        <strain>JCM 10833 / BCRC 13528 / IAM 13628 / NBRC 14792 / USDA 110</strain>
    </source>
</reference>
<organism>
    <name type="scientific">Bradyrhizobium diazoefficiens (strain JCM 10833 / BCRC 13528 / IAM 13628 / NBRC 14792 / USDA 110)</name>
    <dbReference type="NCBI Taxonomy" id="224911"/>
    <lineage>
        <taxon>Bacteria</taxon>
        <taxon>Pseudomonadati</taxon>
        <taxon>Pseudomonadota</taxon>
        <taxon>Alphaproteobacteria</taxon>
        <taxon>Hyphomicrobiales</taxon>
        <taxon>Nitrobacteraceae</taxon>
        <taxon>Bradyrhizobium</taxon>
    </lineage>
</organism>
<feature type="chain" id="PRO_0000129034" description="Hydrogenase maturation factor HypA 1">
    <location>
        <begin position="1"/>
        <end position="113"/>
    </location>
</feature>
<feature type="binding site" evidence="1">
    <location>
        <position position="2"/>
    </location>
    <ligand>
        <name>Ni(2+)</name>
        <dbReference type="ChEBI" id="CHEBI:49786"/>
    </ligand>
</feature>
<feature type="binding site" evidence="1">
    <location>
        <position position="73"/>
    </location>
    <ligand>
        <name>Zn(2+)</name>
        <dbReference type="ChEBI" id="CHEBI:29105"/>
    </ligand>
</feature>
<feature type="binding site" evidence="1">
    <location>
        <position position="76"/>
    </location>
    <ligand>
        <name>Zn(2+)</name>
        <dbReference type="ChEBI" id="CHEBI:29105"/>
    </ligand>
</feature>
<feature type="binding site" evidence="1">
    <location>
        <position position="89"/>
    </location>
    <ligand>
        <name>Zn(2+)</name>
        <dbReference type="ChEBI" id="CHEBI:29105"/>
    </ligand>
</feature>
<feature type="binding site" evidence="1">
    <location>
        <position position="92"/>
    </location>
    <ligand>
        <name>Zn(2+)</name>
        <dbReference type="ChEBI" id="CHEBI:29105"/>
    </ligand>
</feature>
<name>HYPA1_BRADU</name>
<comment type="function">
    <text evidence="1">Involved in the maturation of [NiFe] hydrogenases. Required for nickel insertion into the metal center of the hydrogenase.</text>
</comment>
<comment type="similarity">
    <text evidence="1">Belongs to the HypA/HybF family.</text>
</comment>
<accession>Q9ANP8</accession>
<accession>Q79UX1</accession>
<proteinExistence type="inferred from homology"/>
<keyword id="KW-0479">Metal-binding</keyword>
<keyword id="KW-0533">Nickel</keyword>
<keyword id="KW-1185">Reference proteome</keyword>
<keyword id="KW-0862">Zinc</keyword>
<protein>
    <recommendedName>
        <fullName evidence="1">Hydrogenase maturation factor HypA 1</fullName>
    </recommendedName>
</protein>
<evidence type="ECO:0000255" key="1">
    <source>
        <dbReference type="HAMAP-Rule" id="MF_00213"/>
    </source>
</evidence>
<gene>
    <name evidence="1" type="primary">hypA1</name>
    <name type="ordered locus">blr1730</name>
</gene>